<reference key="1">
    <citation type="journal article" date="1999" name="Cancer Res.">
        <title>HRad17, a human homologue of the Schizosaccharomyces pombe checkpoint gene rad17, is overexpressed in colon carcinoma.</title>
        <authorList>
            <person name="Bao S."/>
            <person name="Chang M.-S."/>
            <person name="Auclair D."/>
            <person name="Sun Y."/>
            <person name="Wang Y."/>
            <person name="Wong W.-K."/>
            <person name="Zhang J."/>
            <person name="Liu Y."/>
            <person name="Qian X."/>
            <person name="Sutherland R."/>
            <person name="Magi-Galluzi C."/>
            <person name="Weisberg E."/>
            <person name="Cheng E.Y.S."/>
            <person name="Hao L."/>
            <person name="Sasaki H."/>
            <person name="Campbell M.S."/>
            <person name="Kraeft S.-K."/>
            <person name="Loda M."/>
            <person name="Lo K.-M."/>
            <person name="Chen L.B."/>
        </authorList>
    </citation>
    <scope>NUCLEOTIDE SEQUENCE [MRNA]</scope>
    <scope>TISSUE SPECIFICITY</scope>
</reference>
<reference key="2">
    <citation type="journal article" date="1999" name="Genomics">
        <title>Human and mouse homologs of the Schizosaccharomyces pombe rad17+ cell cycle checkpoint control gene.</title>
        <authorList>
            <person name="Bluyssen H.A.R."/>
            <person name="Naus N.C."/>
            <person name="van Os R.I."/>
            <person name="Jaspers I."/>
            <person name="Hoeijmakers J.H.J."/>
            <person name="de Klein A."/>
        </authorList>
    </citation>
    <scope>NUCLEOTIDE SEQUENCE [MRNA]</scope>
    <scope>TISSUE SPECIFICITY</scope>
    <source>
        <tissue>Brain</tissue>
    </source>
</reference>
<reference key="3">
    <citation type="journal article" date="1999" name="Hum. Genet.">
        <title>Human and mouse RAD17 genes: identification, localization, genomic structure and histological expression pattern in normal testis and seminoma.</title>
        <authorList>
            <person name="von Deimling F."/>
            <person name="Scharf J.M."/>
            <person name="Liehr T."/>
            <person name="Rothe M."/>
            <person name="Kelter A.-R."/>
            <person name="Albers P."/>
            <person name="Dietrich W.F."/>
            <person name="Kunkel L.M."/>
            <person name="Wernert N."/>
            <person name="Wirth B."/>
        </authorList>
    </citation>
    <scope>NUCLEOTIDE SEQUENCE [MRNA]</scope>
    <scope>TISSUE SPECIFICITY</scope>
    <source>
        <tissue>Testis</tissue>
    </source>
</reference>
<reference key="4">
    <citation type="journal article" date="2004" name="Genome Res.">
        <title>The status, quality, and expansion of the NIH full-length cDNA project: the Mammalian Gene Collection (MGC).</title>
        <authorList>
            <consortium name="The MGC Project Team"/>
        </authorList>
    </citation>
    <scope>NUCLEOTIDE SEQUENCE [LARGE SCALE MRNA]</scope>
    <source>
        <strain>C57BL/6J</strain>
        <tissue>Egg</tissue>
    </source>
</reference>
<reference key="5">
    <citation type="journal article" date="2001" name="Proc. Natl. Acad. Sci. U.S.A.">
        <title>Phosphorylation of serines 635 and 645 of human Rad17 is cell cycle regulated and is required for G(1)/S checkpoint activation in response to DNA damage.</title>
        <authorList>
            <person name="Post S.M."/>
            <person name="Weng Y.-C."/>
            <person name="Cimprich K."/>
            <person name="Chen L.B."/>
            <person name="Xu Y."/>
            <person name="Lee E.Y.-H.P."/>
        </authorList>
    </citation>
    <scope>PHOSPHORYLATION AT SER-647 AND SER-657</scope>
</reference>
<reference key="6">
    <citation type="journal article" date="2003" name="Nucleic Acids Res.">
        <title>The human checkpoint Rad protein Rad17 is chromatin-associated throughout the cell cycle, localizes to DNA replication sites, and interacts with DNA polymerase epsilon.</title>
        <authorList>
            <person name="Post S.M."/>
            <person name="Tomkinson A.E."/>
            <person name="Lee E.Y.-H.P."/>
        </authorList>
    </citation>
    <scope>PHOSPHORYLATION AT SER-647 AND SER-657</scope>
</reference>
<reference key="7">
    <citation type="journal article" date="2004" name="EMBO J.">
        <title>Mutation of the mouse Rad17 gene leads to embryonic lethality and reveals a role in DNA damage-dependent recombination.</title>
        <authorList>
            <person name="Budzowska M."/>
            <person name="Jaspers I."/>
            <person name="Essers J."/>
            <person name="de Waard H."/>
            <person name="van Drunen E."/>
            <person name="Hanada K."/>
            <person name="Beverloo B."/>
            <person name="Hendriks R.W."/>
            <person name="de Klein A."/>
            <person name="Kanaar R."/>
            <person name="Hoeijmakers J.H."/>
            <person name="Maas A."/>
        </authorList>
    </citation>
    <scope>DISRUPTION PHENOTYPE</scope>
</reference>
<reference key="8">
    <citation type="journal article" date="2007" name="J. Biol. Chem.">
        <title>Mice lacking protein phosphatase 5 are defective in ataxia telangiectasia mutated (ATM)-mediated cell cycle arrest.</title>
        <authorList>
            <person name="Yong W."/>
            <person name="Bao S."/>
            <person name="Chen H."/>
            <person name="Li D."/>
            <person name="Sanchez E.R."/>
            <person name="Shou W."/>
        </authorList>
    </citation>
    <scope>PHOSPHORYLATION AT SER-647</scope>
</reference>
<accession>Q6NXW6</accession>
<accession>O88934</accession>
<accession>O89024</accession>
<name>RAD17_MOUSE</name>
<proteinExistence type="evidence at protein level"/>
<sequence length="688" mass="77391">MSETFLRPKVSSTKVTDWVAPAFDDFEANTAITTITASSLTFSNSSHRRKYLPSTLESNRLSARKRGRLSLEQTHGLETSRERLSDNEPWVDKYKPETQHELAVHKKKIEEVETWLKAQVLEVKPKQGGSVLLITGPPGCGKTTTIKILSKELGIQVQEWVNPILPDFQKDDYKELLSLESNFSVVPYQSQIAVFNDFLLRATKYSKLQMLGDDLTTDKKIILVEELPNQFYRDPNALHEILRKHVQIGRCPLVFIVSDSVSGDNNQRLLFPRNIQEECSVSNISFNPVAPTIMMKFLNRIVTIEASKNGEKIIVPNKTSLELLCQGCSGDIRSAINSLQFSSSKGENSSWSKKKRMSLKSDAAISKSKQKKKHNSTLENQEIQAIGGKDVSLFLFRALGKILYCKRAPLTELDSPRLPAHLSEHDRDTLLVQPEEIVEMSHMPGDFFNLYLHQNYIDFFAEVDDLVPASEFLSFADILGGDWNTRSLLREYSTSVATRGVMHSNKARGFAHCQGGSSFRPLHKPQWFLIQKKYRENCLAAKALFVDFCLPALCLQTQLLPYLALLTIPMRNKAQISFIQDVGRLPLKRSFGRLKMEALTDRELGLIDPDSGDESPHSGGQPAQEAPGEPAQAAQNADPETWSLPLSQNSGSDLPASQPQPFSSKVDMEEEEEEEEDIIIEDYDSEET</sequence>
<gene>
    <name type="primary">Rad17</name>
</gene>
<protein>
    <recommendedName>
        <fullName>Cell cycle checkpoint protein RAD17</fullName>
    </recommendedName>
</protein>
<feature type="chain" id="PRO_0000209949" description="Cell cycle checkpoint protein RAD17">
    <location>
        <begin position="1"/>
        <end position="688"/>
    </location>
</feature>
<feature type="region of interest" description="Disordered" evidence="4">
    <location>
        <begin position="63"/>
        <end position="84"/>
    </location>
</feature>
<feature type="region of interest" description="Disordered" evidence="4">
    <location>
        <begin position="342"/>
        <end position="379"/>
    </location>
</feature>
<feature type="region of interest" description="Interaction with MCM7" evidence="1">
    <location>
        <begin position="431"/>
        <end position="688"/>
    </location>
</feature>
<feature type="region of interest" description="Disordered" evidence="4">
    <location>
        <begin position="605"/>
        <end position="688"/>
    </location>
</feature>
<feature type="short sequence motif" description="RAD1-binding motif" evidence="1">
    <location>
        <begin position="17"/>
        <end position="25"/>
    </location>
</feature>
<feature type="compositionally biased region" description="Low complexity" evidence="4">
    <location>
        <begin position="342"/>
        <end position="351"/>
    </location>
</feature>
<feature type="compositionally biased region" description="Low complexity" evidence="4">
    <location>
        <begin position="619"/>
        <end position="635"/>
    </location>
</feature>
<feature type="compositionally biased region" description="Polar residues" evidence="4">
    <location>
        <begin position="644"/>
        <end position="663"/>
    </location>
</feature>
<feature type="compositionally biased region" description="Acidic residues" evidence="4">
    <location>
        <begin position="668"/>
        <end position="688"/>
    </location>
</feature>
<feature type="binding site" evidence="3">
    <location>
        <begin position="136"/>
        <end position="143"/>
    </location>
    <ligand>
        <name>ATP</name>
        <dbReference type="ChEBI" id="CHEBI:30616"/>
    </ligand>
</feature>
<feature type="modified residue" description="Phosphothreonine" evidence="2">
    <location>
        <position position="55"/>
    </location>
</feature>
<feature type="modified residue" description="Phosphoserine" evidence="1">
    <location>
        <position position="85"/>
    </location>
</feature>
<feature type="modified residue" description="Phosphoserine" evidence="1">
    <location>
        <position position="358"/>
    </location>
</feature>
<feature type="modified residue" description="Phosphoserine; by ATR" evidence="7 8 10">
    <location>
        <position position="647"/>
    </location>
</feature>
<feature type="modified residue" description="Phosphoserine; by ATR" evidence="7 8">
    <location>
        <position position="657"/>
    </location>
</feature>
<feature type="sequence conflict" description="In Ref. 3; CAA09868." evidence="12" ref="3">
    <original>T</original>
    <variation>E</variation>
    <location>
        <position position="16"/>
    </location>
</feature>
<feature type="sequence conflict" description="In Ref. 4; AAH66855." evidence="12" ref="4">
    <original>D</original>
    <variation>N</variation>
    <location>
        <position position="86"/>
    </location>
</feature>
<feature type="sequence conflict" description="In Ref. 4; AAH66855." evidence="12" ref="4">
    <original>D</original>
    <variation>V</variation>
    <location>
        <position position="214"/>
    </location>
</feature>
<feature type="sequence conflict" description="In Ref. 4; AAH66855." evidence="12" ref="4">
    <original>R</original>
    <variation>K</variation>
    <location>
        <position position="397"/>
    </location>
</feature>
<feature type="sequence conflict" description="In Ref. 4; AAH66855." evidence="12" ref="4">
    <original>P</original>
    <variation>S</variation>
    <location>
        <position position="444"/>
    </location>
</feature>
<feature type="sequence conflict" description="In Ref. 3; CAA09868." evidence="12" ref="3">
    <original>Q</original>
    <variation>P</variation>
    <location>
        <position position="580"/>
    </location>
</feature>
<feature type="sequence conflict" description="In Ref. 3; CAA09868." evidence="12" ref="3">
    <original>PHSG</original>
    <variation>AQR</variation>
    <location>
        <begin position="616"/>
        <end position="619"/>
    </location>
</feature>
<organism>
    <name type="scientific">Mus musculus</name>
    <name type="common">Mouse</name>
    <dbReference type="NCBI Taxonomy" id="10090"/>
    <lineage>
        <taxon>Eukaryota</taxon>
        <taxon>Metazoa</taxon>
        <taxon>Chordata</taxon>
        <taxon>Craniata</taxon>
        <taxon>Vertebrata</taxon>
        <taxon>Euteleostomi</taxon>
        <taxon>Mammalia</taxon>
        <taxon>Eutheria</taxon>
        <taxon>Euarchontoglires</taxon>
        <taxon>Glires</taxon>
        <taxon>Rodentia</taxon>
        <taxon>Myomorpha</taxon>
        <taxon>Muroidea</taxon>
        <taxon>Muridae</taxon>
        <taxon>Murinae</taxon>
        <taxon>Mus</taxon>
        <taxon>Mus</taxon>
    </lineage>
</organism>
<comment type="function">
    <text evidence="1">Essential for sustained cell growth, maintenance of chromosomal stability, and ATR-dependent checkpoint activation upon DNA damage (By similarity). Has a weak ATPase activity required for binding to chromatin (By similarity). Participates in the recruitment of the 9-1-1 (RAD1-RAD9-HUS1) complex and RHNO1 onto chromatin, and in CHEK1 activation (By similarity). Involved in homologous recombination by mediating recruitment of the MRN complex to DNA damage sites (By similarity). May also serve as a sensor of DNA replication progression (By similarity).</text>
</comment>
<comment type="subunit">
    <text evidence="1">Part of a DNA-binding complex containing RFC2, RFC3, RFC4 and RFC5. Interacts with RAD1 and RAD9 within the 9-1-1 (RAD1-RAD9-HUS1) complex. Interacts with RAD9B, POLE, SNU13 and MCM7. DNA damage promotes interaction with ATR or ATM and disrupts interaction with the 9-1-1 (RAD1-RAD9-HUS1) complex. Interacts (when phosphorylated) with NBN; promoting recruitment of the MRN complex to DNA damage sites.</text>
</comment>
<comment type="subcellular location">
    <subcellularLocation>
        <location evidence="1">Nucleus</location>
    </subcellularLocation>
    <subcellularLocation>
        <location evidence="1">Chromosome</location>
    </subcellularLocation>
    <text evidence="1">Phosphorylated form redistributes to discrete nuclear foci upon DNA damage. Localizes to DNA double-strand breaks (DSBs).</text>
</comment>
<comment type="tissue specificity">
    <text evidence="5 6 11">Ubiquitous at low levels. Highly expressed in testis, where it is expressed in spermatogonia, spermatocytes and spermatids, but absent in mature spermatozoa (at protein level).</text>
</comment>
<comment type="PTM">
    <text evidence="1 7 8 10">Phosphorylated. Phosphorylation on Ser-647 and Ser-657 is cell cycle-regulated, enhanced by genotoxic stress, and required for activation of checkpoint signaling (PubMed:11687627, PubMed:14500819, PubMed:17376776). Phosphorylation is mediated by ATR upon UV or replication arrest, whereas it may be mediated both by ATR and ATM upon ionizing radiation (By similarity). Phosphorylation on both sites is required for interaction with RAD1 but dispensable for interaction with RFC3 or RFC4 (By similarity). Phosphorylation by ATM in response to DNA damage promotes interaction with NBN and recruitment of the MRN complex to DNA damage sites (By similarity).</text>
</comment>
<comment type="disruption phenotype">
    <text evidence="9">Mice show numerous defects in embryonic development, starting at E8.5.</text>
</comment>
<comment type="similarity">
    <text evidence="12">Belongs to the rad17/RAD24 family.</text>
</comment>
<dbReference type="EMBL" id="AF085737">
    <property type="protein sequence ID" value="AAC36335.1"/>
    <property type="molecule type" value="mRNA"/>
</dbReference>
<dbReference type="EMBL" id="AJ011923">
    <property type="protein sequence ID" value="CAA09868.1"/>
    <property type="molecule type" value="mRNA"/>
</dbReference>
<dbReference type="EMBL" id="BC066855">
    <property type="protein sequence ID" value="AAH66855.1"/>
    <property type="molecule type" value="mRNA"/>
</dbReference>
<dbReference type="CCDS" id="CCDS26733.1"/>
<dbReference type="RefSeq" id="NP_001037836.1">
    <property type="nucleotide sequence ID" value="NM_001044371.2"/>
</dbReference>
<dbReference type="RefSeq" id="NP_001269940.1">
    <property type="nucleotide sequence ID" value="NM_001283011.1"/>
</dbReference>
<dbReference type="RefSeq" id="NP_035363.2">
    <property type="nucleotide sequence ID" value="NM_011233.3"/>
</dbReference>
<dbReference type="RefSeq" id="XP_036013813.1">
    <property type="nucleotide sequence ID" value="XM_036157920.1"/>
</dbReference>
<dbReference type="SMR" id="Q6NXW6"/>
<dbReference type="BioGRID" id="202559">
    <property type="interactions" value="1"/>
</dbReference>
<dbReference type="DIP" id="DIP-59315N"/>
<dbReference type="FunCoup" id="Q6NXW6">
    <property type="interactions" value="3350"/>
</dbReference>
<dbReference type="IntAct" id="Q6NXW6">
    <property type="interactions" value="2"/>
</dbReference>
<dbReference type="STRING" id="10090.ENSMUSP00000022136"/>
<dbReference type="iPTMnet" id="Q6NXW6"/>
<dbReference type="PhosphoSitePlus" id="Q6NXW6"/>
<dbReference type="SwissPalm" id="Q6NXW6"/>
<dbReference type="PaxDb" id="10090-ENSMUSP00000022136"/>
<dbReference type="ProteomicsDB" id="300303"/>
<dbReference type="Pumba" id="Q6NXW6"/>
<dbReference type="Antibodypedia" id="1389">
    <property type="antibodies" value="653 antibodies from 41 providers"/>
</dbReference>
<dbReference type="DNASU" id="19356"/>
<dbReference type="Ensembl" id="ENSMUST00000022136.14">
    <property type="protein sequence ID" value="ENSMUSP00000022136.7"/>
    <property type="gene ID" value="ENSMUSG00000021635.15"/>
</dbReference>
<dbReference type="Ensembl" id="ENSMUST00000177848.3">
    <property type="protein sequence ID" value="ENSMUSP00000136292.2"/>
    <property type="gene ID" value="ENSMUSG00000021635.15"/>
</dbReference>
<dbReference type="GeneID" id="19356"/>
<dbReference type="KEGG" id="mmu:19356"/>
<dbReference type="UCSC" id="uc007rrc.2">
    <property type="organism name" value="mouse"/>
</dbReference>
<dbReference type="AGR" id="MGI:1333807"/>
<dbReference type="CTD" id="5884"/>
<dbReference type="MGI" id="MGI:1333807">
    <property type="gene designation" value="Rad17"/>
</dbReference>
<dbReference type="VEuPathDB" id="HostDB:ENSMUSG00000021635"/>
<dbReference type="eggNOG" id="KOG1970">
    <property type="taxonomic scope" value="Eukaryota"/>
</dbReference>
<dbReference type="GeneTree" id="ENSGT00440000039046"/>
<dbReference type="HOGENOM" id="CLU_018598_0_0_1"/>
<dbReference type="InParanoid" id="Q6NXW6"/>
<dbReference type="OMA" id="YNCLKMA"/>
<dbReference type="OrthoDB" id="10265971at2759"/>
<dbReference type="PhylomeDB" id="Q6NXW6"/>
<dbReference type="Reactome" id="R-MMU-176187">
    <property type="pathway name" value="Activation of ATR in response to replication stress"/>
</dbReference>
<dbReference type="Reactome" id="R-MMU-5685938">
    <property type="pathway name" value="HDR through Single Strand Annealing (SSA)"/>
</dbReference>
<dbReference type="Reactome" id="R-MMU-5693607">
    <property type="pathway name" value="Processing of DNA double-strand break ends"/>
</dbReference>
<dbReference type="Reactome" id="R-MMU-6804756">
    <property type="pathway name" value="Regulation of TP53 Activity through Phosphorylation"/>
</dbReference>
<dbReference type="Reactome" id="R-MMU-69473">
    <property type="pathway name" value="G2/M DNA damage checkpoint"/>
</dbReference>
<dbReference type="BioGRID-ORCS" id="19356">
    <property type="hits" value="28 hits in 115 CRISPR screens"/>
</dbReference>
<dbReference type="ChiTaRS" id="Rad17">
    <property type="organism name" value="mouse"/>
</dbReference>
<dbReference type="PRO" id="PR:Q6NXW6"/>
<dbReference type="Proteomes" id="UP000000589">
    <property type="component" value="Chromosome 13"/>
</dbReference>
<dbReference type="RNAct" id="Q6NXW6">
    <property type="molecule type" value="protein"/>
</dbReference>
<dbReference type="Bgee" id="ENSMUSG00000021635">
    <property type="expression patterns" value="Expressed in cleaving embryo and 263 other cell types or tissues"/>
</dbReference>
<dbReference type="ExpressionAtlas" id="Q6NXW6">
    <property type="expression patterns" value="baseline and differential"/>
</dbReference>
<dbReference type="GO" id="GO:0000781">
    <property type="term" value="C:chromosome, telomeric region"/>
    <property type="evidence" value="ECO:0007669"/>
    <property type="project" value="Ensembl"/>
</dbReference>
<dbReference type="GO" id="GO:0005730">
    <property type="term" value="C:nucleolus"/>
    <property type="evidence" value="ECO:0007669"/>
    <property type="project" value="Ensembl"/>
</dbReference>
<dbReference type="GO" id="GO:0005654">
    <property type="term" value="C:nucleoplasm"/>
    <property type="evidence" value="ECO:0007669"/>
    <property type="project" value="Ensembl"/>
</dbReference>
<dbReference type="GO" id="GO:0031389">
    <property type="term" value="C:Rad17 RFC-like complex"/>
    <property type="evidence" value="ECO:0007669"/>
    <property type="project" value="InterPro"/>
</dbReference>
<dbReference type="GO" id="GO:0035861">
    <property type="term" value="C:site of double-strand break"/>
    <property type="evidence" value="ECO:0000250"/>
    <property type="project" value="UniProtKB"/>
</dbReference>
<dbReference type="GO" id="GO:0005524">
    <property type="term" value="F:ATP binding"/>
    <property type="evidence" value="ECO:0007669"/>
    <property type="project" value="UniProtKB-KW"/>
</dbReference>
<dbReference type="GO" id="GO:0016887">
    <property type="term" value="F:ATP hydrolysis activity"/>
    <property type="evidence" value="ECO:0007669"/>
    <property type="project" value="InterPro"/>
</dbReference>
<dbReference type="GO" id="GO:0140463">
    <property type="term" value="F:chromatin-protein adaptor activity"/>
    <property type="evidence" value="ECO:0000250"/>
    <property type="project" value="UniProtKB"/>
</dbReference>
<dbReference type="GO" id="GO:0003689">
    <property type="term" value="F:DNA clamp loader activity"/>
    <property type="evidence" value="ECO:0007669"/>
    <property type="project" value="InterPro"/>
</dbReference>
<dbReference type="GO" id="GO:0006974">
    <property type="term" value="P:DNA damage response"/>
    <property type="evidence" value="ECO:0000315"/>
    <property type="project" value="MGI"/>
</dbReference>
<dbReference type="GO" id="GO:0006281">
    <property type="term" value="P:DNA repair"/>
    <property type="evidence" value="ECO:0007669"/>
    <property type="project" value="InterPro"/>
</dbReference>
<dbReference type="GO" id="GO:0031573">
    <property type="term" value="P:mitotic intra-S DNA damage checkpoint signaling"/>
    <property type="evidence" value="ECO:0007669"/>
    <property type="project" value="Ensembl"/>
</dbReference>
<dbReference type="GO" id="GO:0008156">
    <property type="term" value="P:negative regulation of DNA replication"/>
    <property type="evidence" value="ECO:0007669"/>
    <property type="project" value="Ensembl"/>
</dbReference>
<dbReference type="GO" id="GO:1990166">
    <property type="term" value="P:protein localization to site of double-strand break"/>
    <property type="evidence" value="ECO:0000250"/>
    <property type="project" value="UniProtKB"/>
</dbReference>
<dbReference type="CDD" id="cd18139">
    <property type="entry name" value="HLD_clamp_RarA"/>
    <property type="match status" value="1"/>
</dbReference>
<dbReference type="FunFam" id="3.40.50.300:FF:000714">
    <property type="entry name" value="cell cycle checkpoint protein RAD17 isoform X1"/>
    <property type="match status" value="1"/>
</dbReference>
<dbReference type="FunFam" id="1.10.8.60:FF:000310">
    <property type="entry name" value="RAD17 checkpoint clamp loader component"/>
    <property type="match status" value="1"/>
</dbReference>
<dbReference type="Gene3D" id="1.10.8.60">
    <property type="match status" value="1"/>
</dbReference>
<dbReference type="Gene3D" id="3.40.50.300">
    <property type="entry name" value="P-loop containing nucleotide triphosphate hydrolases"/>
    <property type="match status" value="1"/>
</dbReference>
<dbReference type="InterPro" id="IPR003593">
    <property type="entry name" value="AAA+_ATPase"/>
</dbReference>
<dbReference type="InterPro" id="IPR004582">
    <property type="entry name" value="Checkpoint_prot_Rad17_Rad24"/>
</dbReference>
<dbReference type="InterPro" id="IPR027417">
    <property type="entry name" value="P-loop_NTPase"/>
</dbReference>
<dbReference type="InterPro" id="IPR018324">
    <property type="entry name" value="Rad17/Rad24_fun/met"/>
</dbReference>
<dbReference type="NCBIfam" id="TIGR00602">
    <property type="entry name" value="rad24"/>
    <property type="match status" value="1"/>
</dbReference>
<dbReference type="PANTHER" id="PTHR12172">
    <property type="entry name" value="CELL CYCLE CHECKPOINT PROTEIN RAD17"/>
    <property type="match status" value="1"/>
</dbReference>
<dbReference type="PANTHER" id="PTHR12172:SF0">
    <property type="entry name" value="CELL CYCLE CHECKPOINT PROTEIN RAD17"/>
    <property type="match status" value="1"/>
</dbReference>
<dbReference type="Pfam" id="PF03215">
    <property type="entry name" value="Rad17"/>
    <property type="match status" value="1"/>
</dbReference>
<dbReference type="SMART" id="SM00382">
    <property type="entry name" value="AAA"/>
    <property type="match status" value="1"/>
</dbReference>
<dbReference type="SUPFAM" id="SSF52540">
    <property type="entry name" value="P-loop containing nucleoside triphosphate hydrolases"/>
    <property type="match status" value="1"/>
</dbReference>
<evidence type="ECO:0000250" key="1">
    <source>
        <dbReference type="UniProtKB" id="O75943"/>
    </source>
</evidence>
<evidence type="ECO:0000250" key="2">
    <source>
        <dbReference type="UniProtKB" id="Q9XT62"/>
    </source>
</evidence>
<evidence type="ECO:0000255" key="3"/>
<evidence type="ECO:0000256" key="4">
    <source>
        <dbReference type="SAM" id="MobiDB-lite"/>
    </source>
</evidence>
<evidence type="ECO:0000269" key="5">
    <source>
    </source>
</evidence>
<evidence type="ECO:0000269" key="6">
    <source>
    </source>
</evidence>
<evidence type="ECO:0000269" key="7">
    <source>
    </source>
</evidence>
<evidence type="ECO:0000269" key="8">
    <source>
    </source>
</evidence>
<evidence type="ECO:0000269" key="9">
    <source>
    </source>
</evidence>
<evidence type="ECO:0000269" key="10">
    <source>
    </source>
</evidence>
<evidence type="ECO:0000269" key="11">
    <source>
    </source>
</evidence>
<evidence type="ECO:0000305" key="12"/>
<keyword id="KW-0067">ATP-binding</keyword>
<keyword id="KW-0131">Cell cycle</keyword>
<keyword id="KW-0158">Chromosome</keyword>
<keyword id="KW-0217">Developmental protein</keyword>
<keyword id="KW-0227">DNA damage</keyword>
<keyword id="KW-0547">Nucleotide-binding</keyword>
<keyword id="KW-0539">Nucleus</keyword>
<keyword id="KW-0597">Phosphoprotein</keyword>
<keyword id="KW-1185">Reference proteome</keyword>